<comment type="tissue specificity">
    <text>Secreted by ovine endometrium under the influence of progesterone.</text>
</comment>
<comment type="PTM">
    <text>Glycosylated; carries the so-called mannose 6-phosphate lysosomal recognition marker on its carbohydrate chains.</text>
</comment>
<comment type="similarity">
    <text evidence="4">Belongs to the serpin family. UTMP subfamily.</text>
</comment>
<name>UTMP_SHEEP</name>
<accession>P21814</accession>
<feature type="signal peptide" evidence="3">
    <location>
        <begin position="1"/>
        <end position="25"/>
    </location>
</feature>
<feature type="chain" id="PRO_0000032532" description="Uterine milk protein">
    <location>
        <begin position="26"/>
        <end position="429"/>
    </location>
</feature>
<feature type="site" description="Reactive bond" evidence="1">
    <location>
        <begin position="390"/>
        <end position="391"/>
    </location>
</feature>
<feature type="glycosylation site" description="N-linked (GlcNAc...) asparagine" evidence="2">
    <location>
        <position position="222"/>
    </location>
</feature>
<feature type="glycosylation site" description="N-linked (GlcNAc...) asparagine" evidence="2">
    <location>
        <position position="268"/>
    </location>
</feature>
<feature type="sequence conflict" description="In Ref. 1; AA sequence." evidence="4" ref="1">
    <original>K</original>
    <variation>R</variation>
    <location>
        <position position="49"/>
    </location>
</feature>
<feature type="sequence conflict" description="In Ref. 1; AA sequence." evidence="4" ref="1">
    <original>H</original>
    <variation>L</variation>
    <location>
        <position position="53"/>
    </location>
</feature>
<organism>
    <name type="scientific">Ovis aries</name>
    <name type="common">Sheep</name>
    <dbReference type="NCBI Taxonomy" id="9940"/>
    <lineage>
        <taxon>Eukaryota</taxon>
        <taxon>Metazoa</taxon>
        <taxon>Chordata</taxon>
        <taxon>Craniata</taxon>
        <taxon>Vertebrata</taxon>
        <taxon>Euteleostomi</taxon>
        <taxon>Mammalia</taxon>
        <taxon>Eutheria</taxon>
        <taxon>Laurasiatheria</taxon>
        <taxon>Artiodactyla</taxon>
        <taxon>Ruminantia</taxon>
        <taxon>Pecora</taxon>
        <taxon>Bovidae</taxon>
        <taxon>Caprinae</taxon>
        <taxon>Ovis</taxon>
    </lineage>
</organism>
<sequence length="429" mass="49223">MSHRRMQLALSLVFILCGLFNSIFCEKQQHSQQHANLVLLKKISAFSQKMEAHPKAFAQELFKALIAENPKKNIIFSPAAMTITLATLSLGIKSTMSTNHPEDLELELKLLDAHKCLHHLVHLGRELVKQKQLRHQDILFLNSKMMANQMLLHQIRKLQKMDIQMIDFSDTEKAKKAISHHVAEKTHTKIRDLITDLNPETILCLVNHIFFKGILKRAFQPNLTQKEDFFLNDKTKVQVDMMRKTEQMLYSRSEELFATMVKMPFKGNVSLILMLPDAGHFDNALKKLTAKRAKLQKISNFRLVHLTLPKFKITFDINFKHLLPKINLKHLLPKIDPKHTLTTTASSQHVTLKAPLPNLEALHQVEIELSEHALTTDTAIHTDNLLKVPANTKEVPVVVKFNRPFLLFVEDEITQTDLFVGQVLNPQVE</sequence>
<protein>
    <recommendedName>
        <fullName>Uterine milk protein</fullName>
        <shortName>UTMP</shortName>
    </recommendedName>
</protein>
<proteinExistence type="evidence at protein level"/>
<evidence type="ECO:0000250" key="1"/>
<evidence type="ECO:0000255" key="2"/>
<evidence type="ECO:0000269" key="3">
    <source>
    </source>
</evidence>
<evidence type="ECO:0000305" key="4"/>
<dbReference type="EMBL" id="M21027">
    <property type="protein sequence ID" value="AAA31587.1"/>
    <property type="molecule type" value="mRNA"/>
</dbReference>
<dbReference type="PIR" id="A33309">
    <property type="entry name" value="A33309"/>
</dbReference>
<dbReference type="RefSeq" id="NP_001009304.1">
    <property type="nucleotide sequence ID" value="NM_001009304.1"/>
</dbReference>
<dbReference type="SMR" id="P21814"/>
<dbReference type="STRING" id="9940.ENSOARP00000016059"/>
<dbReference type="MEROPS" id="I04.981"/>
<dbReference type="PaxDb" id="9940-ENSOARP00000016059"/>
<dbReference type="GeneID" id="443315"/>
<dbReference type="KEGG" id="oas:443315"/>
<dbReference type="CTD" id="612383"/>
<dbReference type="eggNOG" id="KOG2392">
    <property type="taxonomic scope" value="Eukaryota"/>
</dbReference>
<dbReference type="OrthoDB" id="671595at2759"/>
<dbReference type="Proteomes" id="UP000002356">
    <property type="component" value="Unplaced"/>
</dbReference>
<dbReference type="GO" id="GO:0005615">
    <property type="term" value="C:extracellular space"/>
    <property type="evidence" value="ECO:0007669"/>
    <property type="project" value="InterPro"/>
</dbReference>
<dbReference type="GO" id="GO:0030414">
    <property type="term" value="F:peptidase inhibitor activity"/>
    <property type="evidence" value="ECO:0000314"/>
    <property type="project" value="CACAO"/>
</dbReference>
<dbReference type="GO" id="GO:0004867">
    <property type="term" value="F:serine-type endopeptidase inhibitor activity"/>
    <property type="evidence" value="ECO:0007669"/>
    <property type="project" value="UniProtKB-KW"/>
</dbReference>
<dbReference type="GO" id="GO:0007565">
    <property type="term" value="P:female pregnancy"/>
    <property type="evidence" value="ECO:0007669"/>
    <property type="project" value="UniProtKB-KW"/>
</dbReference>
<dbReference type="CDD" id="cd19559">
    <property type="entry name" value="serpinA14_UTMP_UABP-2"/>
    <property type="match status" value="1"/>
</dbReference>
<dbReference type="Gene3D" id="2.30.39.10">
    <property type="entry name" value="Alpha-1-antitrypsin, domain 1"/>
    <property type="match status" value="1"/>
</dbReference>
<dbReference type="Gene3D" id="3.30.497.10">
    <property type="entry name" value="Antithrombin, subunit I, domain 2"/>
    <property type="match status" value="1"/>
</dbReference>
<dbReference type="InterPro" id="IPR023795">
    <property type="entry name" value="Serpin_CS"/>
</dbReference>
<dbReference type="InterPro" id="IPR023796">
    <property type="entry name" value="Serpin_dom"/>
</dbReference>
<dbReference type="InterPro" id="IPR000215">
    <property type="entry name" value="Serpin_fam"/>
</dbReference>
<dbReference type="InterPro" id="IPR036186">
    <property type="entry name" value="Serpin_sf"/>
</dbReference>
<dbReference type="InterPro" id="IPR042178">
    <property type="entry name" value="Serpin_sf_1"/>
</dbReference>
<dbReference type="InterPro" id="IPR042185">
    <property type="entry name" value="Serpin_sf_2"/>
</dbReference>
<dbReference type="PANTHER" id="PTHR11461">
    <property type="entry name" value="SERINE PROTEASE INHIBITOR, SERPIN"/>
    <property type="match status" value="1"/>
</dbReference>
<dbReference type="PANTHER" id="PTHR11461:SF164">
    <property type="entry name" value="UTEROFERRIN-ASSOCIATED PROTEIN"/>
    <property type="match status" value="1"/>
</dbReference>
<dbReference type="Pfam" id="PF00079">
    <property type="entry name" value="Serpin"/>
    <property type="match status" value="1"/>
</dbReference>
<dbReference type="SMART" id="SM00093">
    <property type="entry name" value="SERPIN"/>
    <property type="match status" value="1"/>
</dbReference>
<dbReference type="SUPFAM" id="SSF56574">
    <property type="entry name" value="Serpins"/>
    <property type="match status" value="1"/>
</dbReference>
<dbReference type="PROSITE" id="PS00284">
    <property type="entry name" value="SERPIN"/>
    <property type="match status" value="1"/>
</dbReference>
<keyword id="KW-0903">Direct protein sequencing</keyword>
<keyword id="KW-0325">Glycoprotein</keyword>
<keyword id="KW-0635">Pregnancy</keyword>
<keyword id="KW-0646">Protease inhibitor</keyword>
<keyword id="KW-1185">Reference proteome</keyword>
<keyword id="KW-0722">Serine protease inhibitor</keyword>
<keyword id="KW-0732">Signal</keyword>
<reference key="1">
    <citation type="journal article" date="1989" name="J. Biol. Chem.">
        <title>The major progesterone-modulated proteins secreted into the sheep uterus are members of the serpin superfamily of serine protease inhibitors.</title>
        <authorList>
            <person name="Ing N.H."/>
            <person name="Roberts R.M."/>
        </authorList>
    </citation>
    <scope>NUCLEOTIDE SEQUENCE [MRNA]</scope>
    <scope>PROTEIN SEQUENCE OF 26-54</scope>
</reference>